<evidence type="ECO:0000255" key="1">
    <source>
        <dbReference type="HAMAP-Rule" id="MF_00163"/>
    </source>
</evidence>
<dbReference type="EC" id="3.5.1.88" evidence="1"/>
<dbReference type="EMBL" id="CP001157">
    <property type="protein sequence ID" value="ACO76285.1"/>
    <property type="molecule type" value="Genomic_DNA"/>
</dbReference>
<dbReference type="RefSeq" id="WP_012698713.1">
    <property type="nucleotide sequence ID" value="NC_012560.1"/>
</dbReference>
<dbReference type="SMR" id="C1DFV8"/>
<dbReference type="STRING" id="322710.Avin_00170"/>
<dbReference type="EnsemblBacteria" id="ACO76285">
    <property type="protein sequence ID" value="ACO76285"/>
    <property type="gene ID" value="Avin_00170"/>
</dbReference>
<dbReference type="GeneID" id="88183495"/>
<dbReference type="KEGG" id="avn:Avin_00170"/>
<dbReference type="eggNOG" id="COG0242">
    <property type="taxonomic scope" value="Bacteria"/>
</dbReference>
<dbReference type="HOGENOM" id="CLU_061901_2_1_6"/>
<dbReference type="OrthoDB" id="9804313at2"/>
<dbReference type="Proteomes" id="UP000002424">
    <property type="component" value="Chromosome"/>
</dbReference>
<dbReference type="GO" id="GO:0046872">
    <property type="term" value="F:metal ion binding"/>
    <property type="evidence" value="ECO:0007669"/>
    <property type="project" value="UniProtKB-KW"/>
</dbReference>
<dbReference type="GO" id="GO:0042586">
    <property type="term" value="F:peptide deformylase activity"/>
    <property type="evidence" value="ECO:0007669"/>
    <property type="project" value="UniProtKB-UniRule"/>
</dbReference>
<dbReference type="GO" id="GO:0043686">
    <property type="term" value="P:co-translational protein modification"/>
    <property type="evidence" value="ECO:0007669"/>
    <property type="project" value="TreeGrafter"/>
</dbReference>
<dbReference type="GO" id="GO:0006412">
    <property type="term" value="P:translation"/>
    <property type="evidence" value="ECO:0007669"/>
    <property type="project" value="UniProtKB-UniRule"/>
</dbReference>
<dbReference type="CDD" id="cd00487">
    <property type="entry name" value="Pep_deformylase"/>
    <property type="match status" value="1"/>
</dbReference>
<dbReference type="FunFam" id="3.90.45.10:FF:000001">
    <property type="entry name" value="Peptide deformylase"/>
    <property type="match status" value="1"/>
</dbReference>
<dbReference type="Gene3D" id="3.90.45.10">
    <property type="entry name" value="Peptide deformylase"/>
    <property type="match status" value="1"/>
</dbReference>
<dbReference type="HAMAP" id="MF_00163">
    <property type="entry name" value="Pep_deformylase"/>
    <property type="match status" value="1"/>
</dbReference>
<dbReference type="InterPro" id="IPR023635">
    <property type="entry name" value="Peptide_deformylase"/>
</dbReference>
<dbReference type="InterPro" id="IPR036821">
    <property type="entry name" value="Peptide_deformylase_sf"/>
</dbReference>
<dbReference type="NCBIfam" id="TIGR00079">
    <property type="entry name" value="pept_deformyl"/>
    <property type="match status" value="1"/>
</dbReference>
<dbReference type="NCBIfam" id="NF001159">
    <property type="entry name" value="PRK00150.1-3"/>
    <property type="match status" value="1"/>
</dbReference>
<dbReference type="PANTHER" id="PTHR10458">
    <property type="entry name" value="PEPTIDE DEFORMYLASE"/>
    <property type="match status" value="1"/>
</dbReference>
<dbReference type="PANTHER" id="PTHR10458:SF21">
    <property type="entry name" value="PEPTIDE DEFORMYLASE"/>
    <property type="match status" value="1"/>
</dbReference>
<dbReference type="Pfam" id="PF01327">
    <property type="entry name" value="Pep_deformylase"/>
    <property type="match status" value="1"/>
</dbReference>
<dbReference type="PIRSF" id="PIRSF004749">
    <property type="entry name" value="Pep_def"/>
    <property type="match status" value="1"/>
</dbReference>
<dbReference type="PRINTS" id="PR01576">
    <property type="entry name" value="PDEFORMYLASE"/>
</dbReference>
<dbReference type="SUPFAM" id="SSF56420">
    <property type="entry name" value="Peptide deformylase"/>
    <property type="match status" value="1"/>
</dbReference>
<proteinExistence type="inferred from homology"/>
<reference key="1">
    <citation type="journal article" date="2009" name="J. Bacteriol.">
        <title>Genome sequence of Azotobacter vinelandii, an obligate aerobe specialized to support diverse anaerobic metabolic processes.</title>
        <authorList>
            <person name="Setubal J.C."/>
            <person name="Dos Santos P."/>
            <person name="Goldman B.S."/>
            <person name="Ertesvaag H."/>
            <person name="Espin G."/>
            <person name="Rubio L.M."/>
            <person name="Valla S."/>
            <person name="Almeida N.F."/>
            <person name="Balasubramanian D."/>
            <person name="Cromes L."/>
            <person name="Curatti L."/>
            <person name="Du Z."/>
            <person name="Godsy E."/>
            <person name="Goodner B."/>
            <person name="Hellner-Burris K."/>
            <person name="Hernandez J.A."/>
            <person name="Houmiel K."/>
            <person name="Imperial J."/>
            <person name="Kennedy C."/>
            <person name="Larson T.J."/>
            <person name="Latreille P."/>
            <person name="Ligon L.S."/>
            <person name="Lu J."/>
            <person name="Maerk M."/>
            <person name="Miller N.M."/>
            <person name="Norton S."/>
            <person name="O'Carroll I.P."/>
            <person name="Paulsen I."/>
            <person name="Raulfs E.C."/>
            <person name="Roemer R."/>
            <person name="Rosser J."/>
            <person name="Segura D."/>
            <person name="Slater S."/>
            <person name="Stricklin S.L."/>
            <person name="Studholme D.J."/>
            <person name="Sun J."/>
            <person name="Viana C.J."/>
            <person name="Wallin E."/>
            <person name="Wang B."/>
            <person name="Wheeler C."/>
            <person name="Zhu H."/>
            <person name="Dean D.R."/>
            <person name="Dixon R."/>
            <person name="Wood D."/>
        </authorList>
    </citation>
    <scope>NUCLEOTIDE SEQUENCE [LARGE SCALE GENOMIC DNA]</scope>
    <source>
        <strain>DJ / ATCC BAA-1303</strain>
    </source>
</reference>
<name>DEF_AZOVD</name>
<feature type="chain" id="PRO_1000203599" description="Peptide deformylase">
    <location>
        <begin position="1"/>
        <end position="168"/>
    </location>
</feature>
<feature type="active site" evidence="1">
    <location>
        <position position="135"/>
    </location>
</feature>
<feature type="binding site" evidence="1">
    <location>
        <position position="92"/>
    </location>
    <ligand>
        <name>Fe cation</name>
        <dbReference type="ChEBI" id="CHEBI:24875"/>
    </ligand>
</feature>
<feature type="binding site" evidence="1">
    <location>
        <position position="134"/>
    </location>
    <ligand>
        <name>Fe cation</name>
        <dbReference type="ChEBI" id="CHEBI:24875"/>
    </ligand>
</feature>
<feature type="binding site" evidence="1">
    <location>
        <position position="138"/>
    </location>
    <ligand>
        <name>Fe cation</name>
        <dbReference type="ChEBI" id="CHEBI:24875"/>
    </ligand>
</feature>
<keyword id="KW-0378">Hydrolase</keyword>
<keyword id="KW-0408">Iron</keyword>
<keyword id="KW-0479">Metal-binding</keyword>
<keyword id="KW-0648">Protein biosynthesis</keyword>
<gene>
    <name evidence="1" type="primary">def</name>
    <name type="ordered locus">Avin_00170</name>
</gene>
<comment type="function">
    <text evidence="1">Removes the formyl group from the N-terminal Met of newly synthesized proteins. Requires at least a dipeptide for an efficient rate of reaction. N-terminal L-methionine is a prerequisite for activity but the enzyme has broad specificity at other positions.</text>
</comment>
<comment type="catalytic activity">
    <reaction evidence="1">
        <text>N-terminal N-formyl-L-methionyl-[peptide] + H2O = N-terminal L-methionyl-[peptide] + formate</text>
        <dbReference type="Rhea" id="RHEA:24420"/>
        <dbReference type="Rhea" id="RHEA-COMP:10639"/>
        <dbReference type="Rhea" id="RHEA-COMP:10640"/>
        <dbReference type="ChEBI" id="CHEBI:15377"/>
        <dbReference type="ChEBI" id="CHEBI:15740"/>
        <dbReference type="ChEBI" id="CHEBI:49298"/>
        <dbReference type="ChEBI" id="CHEBI:64731"/>
        <dbReference type="EC" id="3.5.1.88"/>
    </reaction>
</comment>
<comment type="cofactor">
    <cofactor evidence="1">
        <name>Fe(2+)</name>
        <dbReference type="ChEBI" id="CHEBI:29033"/>
    </cofactor>
    <text evidence="1">Binds 1 Fe(2+) ion.</text>
</comment>
<comment type="similarity">
    <text evidence="1">Belongs to the polypeptide deformylase family.</text>
</comment>
<sequence length="168" mass="19339">MAILTILEFPDPRLRTIAKPIETVDDGIRRLIDDMFETMYAAPGIGLAATQVNVHKRLVVMDLSEDKNEPRVFINPEFEALTEELEPYQEGCLSVPGFYENVDRPQKVRIRALDRDGQPFELVAEGLLAVCIQHECDHLNGKLFVDYLSTLKRDRIRKKLEKQHRQHG</sequence>
<accession>C1DFV8</accession>
<organism>
    <name type="scientific">Azotobacter vinelandii (strain DJ / ATCC BAA-1303)</name>
    <dbReference type="NCBI Taxonomy" id="322710"/>
    <lineage>
        <taxon>Bacteria</taxon>
        <taxon>Pseudomonadati</taxon>
        <taxon>Pseudomonadota</taxon>
        <taxon>Gammaproteobacteria</taxon>
        <taxon>Pseudomonadales</taxon>
        <taxon>Pseudomonadaceae</taxon>
        <taxon>Azotobacter</taxon>
    </lineage>
</organism>
<protein>
    <recommendedName>
        <fullName evidence="1">Peptide deformylase</fullName>
        <shortName evidence="1">PDF</shortName>
        <ecNumber evidence="1">3.5.1.88</ecNumber>
    </recommendedName>
    <alternativeName>
        <fullName evidence="1">Polypeptide deformylase</fullName>
    </alternativeName>
</protein>